<feature type="chain" id="PRO_0000269675" description="Putative glutaredoxin-C14">
    <location>
        <begin position="1"/>
        <end position="103"/>
    </location>
</feature>
<feature type="domain" description="Glutaredoxin" evidence="2">
    <location>
        <begin position="1"/>
        <end position="102"/>
    </location>
</feature>
<feature type="short sequence motif" description="Responsive for interaction with TGA factors" evidence="1">
    <location>
        <begin position="100"/>
        <end position="103"/>
    </location>
</feature>
<feature type="disulfide bond" description="Redox-active" evidence="1">
    <location>
        <begin position="21"/>
        <end position="24"/>
    </location>
</feature>
<evidence type="ECO:0000250" key="1"/>
<evidence type="ECO:0000255" key="2">
    <source>
        <dbReference type="PROSITE-ProRule" id="PRU00686"/>
    </source>
</evidence>
<evidence type="ECO:0000305" key="3"/>
<evidence type="ECO:0000312" key="4">
    <source>
        <dbReference type="EMBL" id="EAZ20751.1"/>
    </source>
</evidence>
<reference key="1">
    <citation type="journal article" date="2005" name="BMC Biol.">
        <title>The sequence of rice chromosomes 11 and 12, rich in disease resistance genes and recent gene duplications.</title>
        <authorList>
            <consortium name="The rice chromosomes 11 and 12 sequencing consortia"/>
        </authorList>
    </citation>
    <scope>NUCLEOTIDE SEQUENCE [LARGE SCALE GENOMIC DNA]</scope>
    <source>
        <strain>cv. Nipponbare</strain>
    </source>
</reference>
<reference key="2">
    <citation type="journal article" date="2005" name="Nature">
        <title>The map-based sequence of the rice genome.</title>
        <authorList>
            <consortium name="International rice genome sequencing project (IRGSP)"/>
        </authorList>
    </citation>
    <scope>NUCLEOTIDE SEQUENCE [LARGE SCALE GENOMIC DNA]</scope>
    <source>
        <strain>cv. Nipponbare</strain>
    </source>
</reference>
<reference key="3">
    <citation type="journal article" date="2008" name="Nucleic Acids Res.">
        <title>The rice annotation project database (RAP-DB): 2008 update.</title>
        <authorList>
            <consortium name="The rice annotation project (RAP)"/>
        </authorList>
    </citation>
    <scope>GENOME REANNOTATION</scope>
    <source>
        <strain>cv. Nipponbare</strain>
    </source>
</reference>
<reference key="4">
    <citation type="journal article" date="2013" name="Rice">
        <title>Improvement of the Oryza sativa Nipponbare reference genome using next generation sequence and optical map data.</title>
        <authorList>
            <person name="Kawahara Y."/>
            <person name="de la Bastide M."/>
            <person name="Hamilton J.P."/>
            <person name="Kanamori H."/>
            <person name="McCombie W.R."/>
            <person name="Ouyang S."/>
            <person name="Schwartz D.C."/>
            <person name="Tanaka T."/>
            <person name="Wu J."/>
            <person name="Zhou S."/>
            <person name="Childs K.L."/>
            <person name="Davidson R.M."/>
            <person name="Lin H."/>
            <person name="Quesada-Ocampo L."/>
            <person name="Vaillancourt B."/>
            <person name="Sakai H."/>
            <person name="Lee S.S."/>
            <person name="Kim J."/>
            <person name="Numa H."/>
            <person name="Itoh T."/>
            <person name="Buell C.R."/>
            <person name="Matsumoto T."/>
        </authorList>
    </citation>
    <scope>GENOME REANNOTATION</scope>
    <source>
        <strain>cv. Nipponbare</strain>
    </source>
</reference>
<reference key="5">
    <citation type="journal article" date="2005" name="PLoS Biol.">
        <title>The genomes of Oryza sativa: a history of duplications.</title>
        <authorList>
            <person name="Yu J."/>
            <person name="Wang J."/>
            <person name="Lin W."/>
            <person name="Li S."/>
            <person name="Li H."/>
            <person name="Zhou J."/>
            <person name="Ni P."/>
            <person name="Dong W."/>
            <person name="Hu S."/>
            <person name="Zeng C."/>
            <person name="Zhang J."/>
            <person name="Zhang Y."/>
            <person name="Li R."/>
            <person name="Xu Z."/>
            <person name="Li S."/>
            <person name="Li X."/>
            <person name="Zheng H."/>
            <person name="Cong L."/>
            <person name="Lin L."/>
            <person name="Yin J."/>
            <person name="Geng J."/>
            <person name="Li G."/>
            <person name="Shi J."/>
            <person name="Liu J."/>
            <person name="Lv H."/>
            <person name="Li J."/>
            <person name="Wang J."/>
            <person name="Deng Y."/>
            <person name="Ran L."/>
            <person name="Shi X."/>
            <person name="Wang X."/>
            <person name="Wu Q."/>
            <person name="Li C."/>
            <person name="Ren X."/>
            <person name="Wang J."/>
            <person name="Wang X."/>
            <person name="Li D."/>
            <person name="Liu D."/>
            <person name="Zhang X."/>
            <person name="Ji Z."/>
            <person name="Zhao W."/>
            <person name="Sun Y."/>
            <person name="Zhang Z."/>
            <person name="Bao J."/>
            <person name="Han Y."/>
            <person name="Dong L."/>
            <person name="Ji J."/>
            <person name="Chen P."/>
            <person name="Wu S."/>
            <person name="Liu J."/>
            <person name="Xiao Y."/>
            <person name="Bu D."/>
            <person name="Tan J."/>
            <person name="Yang L."/>
            <person name="Ye C."/>
            <person name="Zhang J."/>
            <person name="Xu J."/>
            <person name="Zhou Y."/>
            <person name="Yu Y."/>
            <person name="Zhang B."/>
            <person name="Zhuang S."/>
            <person name="Wei H."/>
            <person name="Liu B."/>
            <person name="Lei M."/>
            <person name="Yu H."/>
            <person name="Li Y."/>
            <person name="Xu H."/>
            <person name="Wei S."/>
            <person name="He X."/>
            <person name="Fang L."/>
            <person name="Zhang Z."/>
            <person name="Zhang Y."/>
            <person name="Huang X."/>
            <person name="Su Z."/>
            <person name="Tong W."/>
            <person name="Li J."/>
            <person name="Tong Z."/>
            <person name="Li S."/>
            <person name="Ye J."/>
            <person name="Wang L."/>
            <person name="Fang L."/>
            <person name="Lei T."/>
            <person name="Chen C.-S."/>
            <person name="Chen H.-C."/>
            <person name="Xu Z."/>
            <person name="Li H."/>
            <person name="Huang H."/>
            <person name="Zhang F."/>
            <person name="Xu H."/>
            <person name="Li N."/>
            <person name="Zhao C."/>
            <person name="Li S."/>
            <person name="Dong L."/>
            <person name="Huang Y."/>
            <person name="Li L."/>
            <person name="Xi Y."/>
            <person name="Qi Q."/>
            <person name="Li W."/>
            <person name="Zhang B."/>
            <person name="Hu W."/>
            <person name="Zhang Y."/>
            <person name="Tian X."/>
            <person name="Jiao Y."/>
            <person name="Liang X."/>
            <person name="Jin J."/>
            <person name="Gao L."/>
            <person name="Zheng W."/>
            <person name="Hao B."/>
            <person name="Liu S.-M."/>
            <person name="Wang W."/>
            <person name="Yuan L."/>
            <person name="Cao M."/>
            <person name="McDermott J."/>
            <person name="Samudrala R."/>
            <person name="Wang J."/>
            <person name="Wong G.K.-S."/>
            <person name="Yang H."/>
        </authorList>
    </citation>
    <scope>NUCLEOTIDE SEQUENCE [LARGE SCALE GENOMIC DNA]</scope>
    <source>
        <strain>cv. Nipponbare</strain>
    </source>
</reference>
<reference key="6">
    <citation type="journal article" date="2006" name="J. Exp. Bot.">
        <title>Genome-wide analysis of plant glutaredoxin systems.</title>
        <authorList>
            <person name="Rouhier N."/>
            <person name="Couturier J."/>
            <person name="Jacquot J.-P."/>
        </authorList>
    </citation>
    <scope>GENE FAMILY</scope>
</reference>
<organism>
    <name type="scientific">Oryza sativa subsp. japonica</name>
    <name type="common">Rice</name>
    <dbReference type="NCBI Taxonomy" id="39947"/>
    <lineage>
        <taxon>Eukaryota</taxon>
        <taxon>Viridiplantae</taxon>
        <taxon>Streptophyta</taxon>
        <taxon>Embryophyta</taxon>
        <taxon>Tracheophyta</taxon>
        <taxon>Spermatophyta</taxon>
        <taxon>Magnoliopsida</taxon>
        <taxon>Liliopsida</taxon>
        <taxon>Poales</taxon>
        <taxon>Poaceae</taxon>
        <taxon>BOP clade</taxon>
        <taxon>Oryzoideae</taxon>
        <taxon>Oryzeae</taxon>
        <taxon>Oryzinae</taxon>
        <taxon>Oryza</taxon>
        <taxon>Oryza sativa</taxon>
    </lineage>
</organism>
<name>GRC14_ORYSJ</name>
<gene>
    <name type="primary">GRXC14</name>
    <name type="ordered locus">Os12g0538600</name>
    <name type="ordered locus">LOC_Os12g35330</name>
    <name evidence="4" type="ORF">OsJ_36375</name>
</gene>
<dbReference type="EMBL" id="DP000011">
    <property type="protein sequence ID" value="ABA99336.1"/>
    <property type="molecule type" value="Genomic_DNA"/>
</dbReference>
<dbReference type="EMBL" id="AP008218">
    <property type="protein sequence ID" value="BAF29961.2"/>
    <property type="molecule type" value="Genomic_DNA"/>
</dbReference>
<dbReference type="EMBL" id="AP014968">
    <property type="protein sequence ID" value="BAT17477.1"/>
    <property type="molecule type" value="Genomic_DNA"/>
</dbReference>
<dbReference type="EMBL" id="CM000149">
    <property type="protein sequence ID" value="EAZ20751.1"/>
    <property type="molecule type" value="Genomic_DNA"/>
</dbReference>
<dbReference type="RefSeq" id="XP_015619548.1">
    <property type="nucleotide sequence ID" value="XM_015764062.1"/>
</dbReference>
<dbReference type="SMR" id="Q0IMV4"/>
<dbReference type="FunCoup" id="Q0IMV4">
    <property type="interactions" value="23"/>
</dbReference>
<dbReference type="STRING" id="39947.Q0IMV4"/>
<dbReference type="PaxDb" id="39947-Q0IMV4"/>
<dbReference type="EnsemblPlants" id="Os12t0538600-00">
    <property type="protein sequence ID" value="Os12t0538600-00"/>
    <property type="gene ID" value="Os12g0538600"/>
</dbReference>
<dbReference type="Gramene" id="Os12t0538600-00">
    <property type="protein sequence ID" value="Os12t0538600-00"/>
    <property type="gene ID" value="Os12g0538600"/>
</dbReference>
<dbReference type="KEGG" id="dosa:Os12g0538600"/>
<dbReference type="eggNOG" id="KOG1752">
    <property type="taxonomic scope" value="Eukaryota"/>
</dbReference>
<dbReference type="HOGENOM" id="CLU_026126_6_0_1"/>
<dbReference type="InParanoid" id="Q0IMV4"/>
<dbReference type="OMA" id="MERALHM"/>
<dbReference type="OrthoDB" id="418495at2759"/>
<dbReference type="Proteomes" id="UP000000763">
    <property type="component" value="Chromosome 12"/>
</dbReference>
<dbReference type="Proteomes" id="UP000007752">
    <property type="component" value="Chromosome 12"/>
</dbReference>
<dbReference type="Proteomes" id="UP000059680">
    <property type="component" value="Chromosome 12"/>
</dbReference>
<dbReference type="GO" id="GO:0005737">
    <property type="term" value="C:cytoplasm"/>
    <property type="evidence" value="ECO:0007669"/>
    <property type="project" value="UniProtKB-SubCell"/>
</dbReference>
<dbReference type="GO" id="GO:0005634">
    <property type="term" value="C:nucleus"/>
    <property type="evidence" value="ECO:0007669"/>
    <property type="project" value="UniProtKB-SubCell"/>
</dbReference>
<dbReference type="CDD" id="cd03419">
    <property type="entry name" value="GRX_GRXh_1_2_like"/>
    <property type="match status" value="1"/>
</dbReference>
<dbReference type="FunFam" id="3.40.30.10:FF:000028">
    <property type="entry name" value="Glutaredoxin family protein"/>
    <property type="match status" value="1"/>
</dbReference>
<dbReference type="Gene3D" id="3.40.30.10">
    <property type="entry name" value="Glutaredoxin"/>
    <property type="match status" value="1"/>
</dbReference>
<dbReference type="InterPro" id="IPR011905">
    <property type="entry name" value="GlrX-like_pln_2"/>
</dbReference>
<dbReference type="InterPro" id="IPR002109">
    <property type="entry name" value="Glutaredoxin"/>
</dbReference>
<dbReference type="InterPro" id="IPR036249">
    <property type="entry name" value="Thioredoxin-like_sf"/>
</dbReference>
<dbReference type="NCBIfam" id="TIGR02189">
    <property type="entry name" value="GlrX-like_plant"/>
    <property type="match status" value="1"/>
</dbReference>
<dbReference type="PANTHER" id="PTHR10168">
    <property type="entry name" value="GLUTAREDOXIN"/>
    <property type="match status" value="1"/>
</dbReference>
<dbReference type="Pfam" id="PF00462">
    <property type="entry name" value="Glutaredoxin"/>
    <property type="match status" value="1"/>
</dbReference>
<dbReference type="SUPFAM" id="SSF52833">
    <property type="entry name" value="Thioredoxin-like"/>
    <property type="match status" value="1"/>
</dbReference>
<dbReference type="PROSITE" id="PS51354">
    <property type="entry name" value="GLUTAREDOXIN_2"/>
    <property type="match status" value="1"/>
</dbReference>
<comment type="function">
    <text evidence="1">Has a glutathione-disulfide oxidoreductase activity in the presence of NADPH and glutathione reductase. Reduces low molecular weight disulfides and proteins (By similarity).</text>
</comment>
<comment type="subcellular location">
    <subcellularLocation>
        <location evidence="1">Cytoplasm</location>
    </subcellularLocation>
    <subcellularLocation>
        <location evidence="1">Nucleus</location>
    </subcellularLocation>
</comment>
<comment type="similarity">
    <text evidence="3">Belongs to the glutaredoxin family. CC-type subfamily.</text>
</comment>
<proteinExistence type="inferred from homology"/>
<accession>Q0IMV4</accession>
<accession>A3CI38</accession>
<accession>Q2QP87</accession>
<sequence>MDRVMKLASERAVVIFTLSSCCMCHTVTRLFCDLGVNALVHELDQDPRGKEMERALLKLLGRGPPVPVVFIGGKLVGGTNKIMSLHLGGELIPMLKNAGALWL</sequence>
<protein>
    <recommendedName>
        <fullName>Putative glutaredoxin-C14</fullName>
    </recommendedName>
</protein>
<keyword id="KW-0963">Cytoplasm</keyword>
<keyword id="KW-1015">Disulfide bond</keyword>
<keyword id="KW-0249">Electron transport</keyword>
<keyword id="KW-0539">Nucleus</keyword>
<keyword id="KW-0676">Redox-active center</keyword>
<keyword id="KW-1185">Reference proteome</keyword>
<keyword id="KW-0813">Transport</keyword>